<dbReference type="EMBL" id="L40356">
    <property type="protein sequence ID" value="AAD40811.1"/>
    <property type="molecule type" value="Genomic_DNA"/>
</dbReference>
<dbReference type="PIR" id="A56342">
    <property type="entry name" value="A56342"/>
</dbReference>
<dbReference type="SMR" id="Q9XB20"/>
<dbReference type="GO" id="GO:0005829">
    <property type="term" value="C:cytosol"/>
    <property type="evidence" value="ECO:0007669"/>
    <property type="project" value="TreeGrafter"/>
</dbReference>
<dbReference type="GO" id="GO:0003677">
    <property type="term" value="F:DNA binding"/>
    <property type="evidence" value="ECO:0007669"/>
    <property type="project" value="UniProtKB-KW"/>
</dbReference>
<dbReference type="GO" id="GO:0030527">
    <property type="term" value="F:structural constituent of chromatin"/>
    <property type="evidence" value="ECO:0007669"/>
    <property type="project" value="InterPro"/>
</dbReference>
<dbReference type="GO" id="GO:0030261">
    <property type="term" value="P:chromosome condensation"/>
    <property type="evidence" value="ECO:0007669"/>
    <property type="project" value="UniProtKB-KW"/>
</dbReference>
<dbReference type="CDD" id="cd13831">
    <property type="entry name" value="HU"/>
    <property type="match status" value="1"/>
</dbReference>
<dbReference type="FunFam" id="4.10.520.10:FF:000001">
    <property type="entry name" value="DNA-binding protein HU"/>
    <property type="match status" value="1"/>
</dbReference>
<dbReference type="Gene3D" id="4.10.520.10">
    <property type="entry name" value="IHF-like DNA-binding proteins"/>
    <property type="match status" value="1"/>
</dbReference>
<dbReference type="InterPro" id="IPR000119">
    <property type="entry name" value="Hist_DNA-bd"/>
</dbReference>
<dbReference type="InterPro" id="IPR020816">
    <property type="entry name" value="Histone-like_DNA-bd_CS"/>
</dbReference>
<dbReference type="InterPro" id="IPR010992">
    <property type="entry name" value="IHF-like_DNA-bd_dom_sf"/>
</dbReference>
<dbReference type="PANTHER" id="PTHR33175">
    <property type="entry name" value="DNA-BINDING PROTEIN HU"/>
    <property type="match status" value="1"/>
</dbReference>
<dbReference type="PANTHER" id="PTHR33175:SF3">
    <property type="entry name" value="DNA-BINDING PROTEIN HU-BETA"/>
    <property type="match status" value="1"/>
</dbReference>
<dbReference type="Pfam" id="PF00216">
    <property type="entry name" value="Bac_DNA_binding"/>
    <property type="match status" value="1"/>
</dbReference>
<dbReference type="PRINTS" id="PR01727">
    <property type="entry name" value="DNABINDINGHU"/>
</dbReference>
<dbReference type="SMART" id="SM00411">
    <property type="entry name" value="BHL"/>
    <property type="match status" value="1"/>
</dbReference>
<dbReference type="SUPFAM" id="SSF47729">
    <property type="entry name" value="IHF-like DNA-binding proteins"/>
    <property type="match status" value="1"/>
</dbReference>
<dbReference type="PROSITE" id="PS00045">
    <property type="entry name" value="HISTONE_LIKE"/>
    <property type="match status" value="1"/>
</dbReference>
<gene>
    <name type="primary">hup</name>
    <name type="synonym">hlpA</name>
</gene>
<name>DBH_STRGN</name>
<keyword id="KW-0226">DNA condensation</keyword>
<keyword id="KW-0238">DNA-binding</keyword>
<keyword id="KW-0843">Virulence</keyword>
<sequence>MANKQDLIAKVAAATELTKKDSAAAVDAVFAAVTEYLSKGEKVQLIGFGNFEVRERAARKGRNPQTGKETKIAASKVPAFKAGKALKDAVK</sequence>
<proteinExistence type="inferred from homology"/>
<organism>
    <name type="scientific">Streptococcus gordonii</name>
    <dbReference type="NCBI Taxonomy" id="1302"/>
    <lineage>
        <taxon>Bacteria</taxon>
        <taxon>Bacillati</taxon>
        <taxon>Bacillota</taxon>
        <taxon>Bacilli</taxon>
        <taxon>Lactobacillales</taxon>
        <taxon>Streptococcaceae</taxon>
        <taxon>Streptococcus</taxon>
    </lineage>
</organism>
<evidence type="ECO:0000305" key="1"/>
<comment type="function">
    <text>Histone-like DNA-binding protein which is capable of wrapping DNA to stabilize it, and thus to prevent its denaturation under extreme environmental conditions. Also seems to act as a fortuitous virulence factor in delayed sequelae by binding to heparan sulfate-proteoglycans in the extracellular matrix of target organs and acting as a nidus for in situ immune complex formation.</text>
</comment>
<comment type="similarity">
    <text evidence="1">Belongs to the bacterial histone-like protein family.</text>
</comment>
<accession>Q9XB20</accession>
<feature type="chain" id="PRO_0000104979" description="DNA-binding protein HU">
    <location>
        <begin position="1"/>
        <end position="91"/>
    </location>
</feature>
<protein>
    <recommendedName>
        <fullName>DNA-binding protein HU</fullName>
    </recommendedName>
</protein>
<reference key="1">
    <citation type="journal article" date="1998" name="Infect. Immun.">
        <title>Streptococcal histone-like protein: primary structure of hlpA and protein binding to lipoteichoic acid and epithelial cells.</title>
        <authorList>
            <person name="Stinson M.W."/>
            <person name="McLaughlin R."/>
            <person name="Choi S.H."/>
            <person name="Juarez Z.E."/>
            <person name="Barnard J."/>
        </authorList>
    </citation>
    <scope>NUCLEOTIDE SEQUENCE [GENOMIC DNA]</scope>
</reference>